<name>SMC6A_ARATH</name>
<protein>
    <recommendedName>
        <fullName>Structural maintenance of chromosomes protein 6A</fullName>
    </recommendedName>
</protein>
<gene>
    <name type="primary">SMC6A</name>
    <name type="ordered locus">At5g07660</name>
    <name type="ORF">MBK20.10</name>
</gene>
<keyword id="KW-0067">ATP-binding</keyword>
<keyword id="KW-0158">Chromosome</keyword>
<keyword id="KW-0175">Coiled coil</keyword>
<keyword id="KW-0227">DNA damage</keyword>
<keyword id="KW-0233">DNA recombination</keyword>
<keyword id="KW-0234">DNA repair</keyword>
<keyword id="KW-0547">Nucleotide-binding</keyword>
<keyword id="KW-0539">Nucleus</keyword>
<keyword id="KW-1185">Reference proteome</keyword>
<organism>
    <name type="scientific">Arabidopsis thaliana</name>
    <name type="common">Mouse-ear cress</name>
    <dbReference type="NCBI Taxonomy" id="3702"/>
    <lineage>
        <taxon>Eukaryota</taxon>
        <taxon>Viridiplantae</taxon>
        <taxon>Streptophyta</taxon>
        <taxon>Embryophyta</taxon>
        <taxon>Tracheophyta</taxon>
        <taxon>Spermatophyta</taxon>
        <taxon>Magnoliopsida</taxon>
        <taxon>eudicotyledons</taxon>
        <taxon>Gunneridae</taxon>
        <taxon>Pentapetalae</taxon>
        <taxon>rosids</taxon>
        <taxon>malvids</taxon>
        <taxon>Brassicales</taxon>
        <taxon>Brassicaceae</taxon>
        <taxon>Camelineae</taxon>
        <taxon>Arabidopsis</taxon>
    </lineage>
</organism>
<comment type="function">
    <text evidence="3">Core component of the SMC5-SMC6 complex that promotes sister chromatid alignment after DNA damage and facilitates double-stranded DNA breaks (DSBs) repair via homologous recombination between sister chromatids.</text>
</comment>
<comment type="subunit">
    <text evidence="1">Forms a heterodimer with SMC5. The SMC5-SMC6 complex is composed of the SMC5 and SMC6 heterodimer attached via their hinge domain and from the non-SMC subunit NSE4A or NSE4B (By similarity).</text>
</comment>
<comment type="subcellular location">
    <subcellularLocation>
        <location evidence="1">Nucleus</location>
    </subcellularLocation>
    <subcellularLocation>
        <location evidence="1">Chromosome</location>
    </subcellularLocation>
    <text evidence="1">Associates with chromatin.</text>
</comment>
<comment type="tissue specificity">
    <text evidence="3">Expressed in seedlings, rosette leaves and floral buds.</text>
</comment>
<comment type="domain">
    <text evidence="1">The flexible hinge domain, which separates the large intramolecular coiled coil regions, allows the heterotypic interaction with the corresponding domain of SMC6, forming a V-shaped heterodimer.</text>
</comment>
<comment type="disruption phenotype">
    <text evidence="3">Delayed root growth in seedlings.</text>
</comment>
<comment type="similarity">
    <text evidence="4">Belongs to the SMC family. SMC6 subfamily.</text>
</comment>
<comment type="sequence caution" evidence="4">
    <conflict type="miscellaneous discrepancy">
        <sequence resource="EMBL-CDS" id="ACQ84165"/>
    </conflict>
    <text>Intron retention.</text>
</comment>
<dbReference type="EMBL" id="FJ869873">
    <property type="protein sequence ID" value="ACQ84165.1"/>
    <property type="status" value="ALT_SEQ"/>
    <property type="molecule type" value="mRNA"/>
</dbReference>
<dbReference type="EMBL" id="AB010070">
    <property type="protein sequence ID" value="BAB11444.1"/>
    <property type="molecule type" value="Genomic_DNA"/>
</dbReference>
<dbReference type="EMBL" id="CP002688">
    <property type="protein sequence ID" value="AED91190.1"/>
    <property type="molecule type" value="Genomic_DNA"/>
</dbReference>
<dbReference type="RefSeq" id="NP_196383.1">
    <property type="nucleotide sequence ID" value="NM_120848.2"/>
</dbReference>
<dbReference type="SMR" id="Q9FLR5"/>
<dbReference type="FunCoup" id="Q9FLR5">
    <property type="interactions" value="3297"/>
</dbReference>
<dbReference type="STRING" id="3702.Q9FLR5"/>
<dbReference type="GlyGen" id="Q9FLR5">
    <property type="glycosylation" value="1 site"/>
</dbReference>
<dbReference type="iPTMnet" id="Q9FLR5"/>
<dbReference type="PaxDb" id="3702-AT5G07660.1"/>
<dbReference type="ProteomicsDB" id="234540"/>
<dbReference type="EnsemblPlants" id="AT5G07660.1">
    <property type="protein sequence ID" value="AT5G07660.1"/>
    <property type="gene ID" value="AT5G07660"/>
</dbReference>
<dbReference type="GeneID" id="830659"/>
<dbReference type="Gramene" id="AT5G07660.1">
    <property type="protein sequence ID" value="AT5G07660.1"/>
    <property type="gene ID" value="AT5G07660"/>
</dbReference>
<dbReference type="KEGG" id="ath:AT5G07660"/>
<dbReference type="Araport" id="AT5G07660"/>
<dbReference type="TAIR" id="AT5G07660">
    <property type="gene designation" value="SMC6A"/>
</dbReference>
<dbReference type="eggNOG" id="KOG0250">
    <property type="taxonomic scope" value="Eukaryota"/>
</dbReference>
<dbReference type="HOGENOM" id="CLU_009063_1_0_1"/>
<dbReference type="InParanoid" id="Q9FLR5"/>
<dbReference type="OMA" id="VHVEMNN"/>
<dbReference type="PhylomeDB" id="Q9FLR5"/>
<dbReference type="PRO" id="PR:Q9FLR5"/>
<dbReference type="Proteomes" id="UP000006548">
    <property type="component" value="Chromosome 5"/>
</dbReference>
<dbReference type="ExpressionAtlas" id="Q9FLR5">
    <property type="expression patterns" value="baseline and differential"/>
</dbReference>
<dbReference type="GO" id="GO:0005694">
    <property type="term" value="C:chromosome"/>
    <property type="evidence" value="ECO:0007669"/>
    <property type="project" value="UniProtKB-SubCell"/>
</dbReference>
<dbReference type="GO" id="GO:0005634">
    <property type="term" value="C:nucleus"/>
    <property type="evidence" value="ECO:0007669"/>
    <property type="project" value="UniProtKB-SubCell"/>
</dbReference>
<dbReference type="GO" id="GO:0005524">
    <property type="term" value="F:ATP binding"/>
    <property type="evidence" value="ECO:0007669"/>
    <property type="project" value="UniProtKB-KW"/>
</dbReference>
<dbReference type="GO" id="GO:0000724">
    <property type="term" value="P:double-strand break repair via homologous recombination"/>
    <property type="evidence" value="ECO:0000315"/>
    <property type="project" value="TAIR"/>
</dbReference>
<dbReference type="GO" id="GO:0010165">
    <property type="term" value="P:response to X-ray"/>
    <property type="evidence" value="ECO:0000315"/>
    <property type="project" value="TAIR"/>
</dbReference>
<dbReference type="GO" id="GO:0007062">
    <property type="term" value="P:sister chromatid cohesion"/>
    <property type="evidence" value="ECO:0000315"/>
    <property type="project" value="TAIR"/>
</dbReference>
<dbReference type="FunFam" id="3.40.50.300:FF:003772">
    <property type="entry name" value="Structural maintenance of chromosomes protein 6A"/>
    <property type="match status" value="1"/>
</dbReference>
<dbReference type="Gene3D" id="1.10.287.1490">
    <property type="match status" value="1"/>
</dbReference>
<dbReference type="Gene3D" id="3.40.50.300">
    <property type="entry name" value="P-loop containing nucleotide triphosphate hydrolases"/>
    <property type="match status" value="2"/>
</dbReference>
<dbReference type="InterPro" id="IPR027417">
    <property type="entry name" value="P-loop_NTPase"/>
</dbReference>
<dbReference type="InterPro" id="IPR003395">
    <property type="entry name" value="RecF/RecN/SMC_N"/>
</dbReference>
<dbReference type="InterPro" id="IPR036277">
    <property type="entry name" value="SMC_hinge_sf"/>
</dbReference>
<dbReference type="PANTHER" id="PTHR19306">
    <property type="entry name" value="STRUCTURAL MAINTENANCE OF CHROMOSOMES 5,6 SMC5, SMC6"/>
    <property type="match status" value="1"/>
</dbReference>
<dbReference type="PANTHER" id="PTHR19306:SF6">
    <property type="entry name" value="STRUCTURAL MAINTENANCE OF CHROMOSOMES PROTEIN 6"/>
    <property type="match status" value="1"/>
</dbReference>
<dbReference type="Pfam" id="PF02463">
    <property type="entry name" value="SMC_N"/>
    <property type="match status" value="1"/>
</dbReference>
<dbReference type="SUPFAM" id="SSF52540">
    <property type="entry name" value="P-loop containing nucleoside triphosphate hydrolases"/>
    <property type="match status" value="1"/>
</dbReference>
<dbReference type="SUPFAM" id="SSF75553">
    <property type="entry name" value="Smc hinge domain"/>
    <property type="match status" value="1"/>
</dbReference>
<accession>Q9FLR5</accession>
<accession>C4P4D4</accession>
<feature type="chain" id="PRO_0000424412" description="Structural maintenance of chromosomes protein 6A">
    <location>
        <begin position="1"/>
        <end position="1058"/>
    </location>
</feature>
<feature type="domain" description="Zinc-hook">
    <location>
        <begin position="23"/>
        <end position="1049"/>
    </location>
</feature>
<feature type="region of interest" description="Flexible hinge">
    <location>
        <begin position="450"/>
        <end position="633"/>
    </location>
</feature>
<feature type="coiled-coil region" evidence="2">
    <location>
        <begin position="136"/>
        <end position="449"/>
    </location>
</feature>
<feature type="coiled-coil region" evidence="2">
    <location>
        <begin position="634"/>
        <end position="927"/>
    </location>
</feature>
<feature type="binding site" evidence="2">
    <location>
        <begin position="50"/>
        <end position="57"/>
    </location>
    <ligand>
        <name>ATP</name>
        <dbReference type="ChEBI" id="CHEBI:30616"/>
    </ligand>
</feature>
<evidence type="ECO:0000250" key="1"/>
<evidence type="ECO:0000255" key="2"/>
<evidence type="ECO:0000269" key="3">
    <source>
    </source>
</evidence>
<evidence type="ECO:0000305" key="4"/>
<sequence length="1058" mass="122195">MDEHGDHRQSNPFNDQQTSSGKILRIRLENFMCHSNLEIEFGDWVNFITGQNGSGKSAILTALCVAFGCRARGTQRAATLKDFIKTGCSYALVYVELKNQGEDAFKPEIYGDTLIIERRISDSTSLTVLKDHQGRKISSRKEELRELVEHYNIDVENPCVIMSQDKSREFLHSGNDKDKFKFFYKATLLQQVDDILQSIGTKLNSANALLDEMEKTIKPIEKEINELLEKIKNMEHVEEITQQVLHLKKKLAWSWVYDVDRQLKEQNEKIVKFKERVPTCQNKIDRKLGEVESLRVSLTEKKAQVACLIDESTAMKRELECLRQSMKKAAREKIALEEEYHHKCSNIQKIKDRVRRLERQIEDINEMTIRSTQVEQSEIEGKLNQLTVEVEKAESLVSSLKEEENMVMEKASAGGKEKEHIEEMIRDHEKKQRNMNAHINDLKKHQTNKVTAFGGDKVINLLRAIERHHRRFKMPPIGPIGAHVTLINGNRWASAVEQALGNLLNAFIVTDHKDLVALRDCGKEAKYNNLKIIIYDFSRPRLDIPRHMIPQTEHPTILSVLHSENTTVLNVLVDVSCVERHVLAENYEVGKIIAFERRLSHLKDVFTIDGYRMFSRGPVQTTLPPRPRRPTRLCASFDDQIKDLEIEASREQSEIQECRGQKREAEMNLEGLESTMRRLKKQRTQLEKDLTRKELEMQDLKNSVASETKASPTSSVNELHLEIMKFQKEIEEKESLLEKLQDSLKEAELKANELKASYENLYESAKGEIEALEKAEDELKEKEDELHSAETEKNHYEDIMKDKVLPEIKQAETIYKELEMKRQESNKKASIICPESEIKALGPWDGPTPLQLSAQINKINHRLKRENENYSESIDDLRIMHGEKEQKIGKKRKTYKSCREKLKVCKDAVDSRWNKLQRNKDLLKRELTWQFNHHLGKKGISGNIRVSYEDKTLSIEVKMPQDATNSAVRDTRGLSGGERSFSTLCFTLALQNMTEAPIRAMDEFDVFMDAVSRKISLDTLIDFALKQGSQWMFITPHDISMVKSHEKIKKQQMAAPRS</sequence>
<proteinExistence type="evidence at transcript level"/>
<reference key="1">
    <citation type="journal article" date="2009" name="Plant Cell">
        <title>The STRUCTURAL MAINTENANCE OF CHROMOSOMES 5/6 complex promotes sister chromatid alignment and homologous recombination after DNA damage in Arabidopsis thaliana.</title>
        <authorList>
            <person name="Watanabe K."/>
            <person name="Pacher M."/>
            <person name="Dukowic S."/>
            <person name="Schubert V."/>
            <person name="Puchta H."/>
            <person name="Schubert I."/>
        </authorList>
    </citation>
    <scope>NUCLEOTIDE SEQUENCE [MRNA]</scope>
    <scope>FUNCTION</scope>
    <scope>TISSUE SPECIFICITY</scope>
    <scope>DISRUPTION PHENOTYPE</scope>
</reference>
<reference key="2">
    <citation type="journal article" date="1998" name="DNA Res.">
        <title>Structural analysis of Arabidopsis thaliana chromosome 5. IV. Sequence features of the regions of 1,456,315 bp covered by nineteen physically assigned P1 and TAC clones.</title>
        <authorList>
            <person name="Sato S."/>
            <person name="Kaneko T."/>
            <person name="Kotani H."/>
            <person name="Nakamura Y."/>
            <person name="Asamizu E."/>
            <person name="Miyajima N."/>
            <person name="Tabata S."/>
        </authorList>
    </citation>
    <scope>NUCLEOTIDE SEQUENCE [LARGE SCALE GENOMIC DNA]</scope>
    <source>
        <strain>cv. Columbia</strain>
    </source>
</reference>
<reference key="3">
    <citation type="journal article" date="2017" name="Plant J.">
        <title>Araport11: a complete reannotation of the Arabidopsis thaliana reference genome.</title>
        <authorList>
            <person name="Cheng C.Y."/>
            <person name="Krishnakumar V."/>
            <person name="Chan A.P."/>
            <person name="Thibaud-Nissen F."/>
            <person name="Schobel S."/>
            <person name="Town C.D."/>
        </authorList>
    </citation>
    <scope>GENOME REANNOTATION</scope>
    <source>
        <strain>cv. Columbia</strain>
    </source>
</reference>